<proteinExistence type="inferred from homology"/>
<sequence>MQNAFTIDQLPLSWQEQLENEWSQPYMHKLREFLQTEYSRTTVYPAKDNIFTALKSTPFDAVRVVVLGQDPYPGEGQAHGLSFSVPHGVRLPPSLMNIFRELQTDLGIKNTTGCLQPWADQGVLLLNTVLTVRAGAPFSHAGQGWERFTDAIVTKLIENRSHVIFVLWGNAARKKCDLLFRSTHKHAILAAAHPSPLAAHRGFFGCSHFSKINYLLKKLERPMINWKLP</sequence>
<name>UNG_CHLFF</name>
<feature type="chain" id="PRO_1000009877" description="Uracil-DNA glycosylase">
    <location>
        <begin position="1"/>
        <end position="229"/>
    </location>
</feature>
<feature type="active site" description="Proton acceptor" evidence="1">
    <location>
        <position position="70"/>
    </location>
</feature>
<reference key="1">
    <citation type="journal article" date="2006" name="DNA Res.">
        <title>Genome sequence of the cat pathogen, Chlamydophila felis.</title>
        <authorList>
            <person name="Azuma Y."/>
            <person name="Hirakawa H."/>
            <person name="Yamashita A."/>
            <person name="Cai Y."/>
            <person name="Rahman M.A."/>
            <person name="Suzuki H."/>
            <person name="Mitaku S."/>
            <person name="Toh H."/>
            <person name="Goto S."/>
            <person name="Murakami T."/>
            <person name="Sugi K."/>
            <person name="Hayashi H."/>
            <person name="Fukushi H."/>
            <person name="Hattori M."/>
            <person name="Kuhara S."/>
            <person name="Shirai M."/>
        </authorList>
    </citation>
    <scope>NUCLEOTIDE SEQUENCE [LARGE SCALE GENOMIC DNA]</scope>
    <source>
        <strain>Fe/C-56</strain>
    </source>
</reference>
<comment type="function">
    <text evidence="1">Excises uracil residues from the DNA which can arise as a result of misincorporation of dUMP residues by DNA polymerase or due to deamination of cytosine.</text>
</comment>
<comment type="catalytic activity">
    <reaction evidence="1">
        <text>Hydrolyzes single-stranded DNA or mismatched double-stranded DNA and polynucleotides, releasing free uracil.</text>
        <dbReference type="EC" id="3.2.2.27"/>
    </reaction>
</comment>
<comment type="subcellular location">
    <subcellularLocation>
        <location evidence="1">Cytoplasm</location>
    </subcellularLocation>
</comment>
<comment type="similarity">
    <text evidence="1">Belongs to the uracil-DNA glycosylase (UDG) superfamily. UNG family.</text>
</comment>
<protein>
    <recommendedName>
        <fullName evidence="1">Uracil-DNA glycosylase</fullName>
        <shortName evidence="1">UDG</shortName>
        <ecNumber evidence="1">3.2.2.27</ecNumber>
    </recommendedName>
</protein>
<evidence type="ECO:0000255" key="1">
    <source>
        <dbReference type="HAMAP-Rule" id="MF_00148"/>
    </source>
</evidence>
<organism>
    <name type="scientific">Chlamydia felis (strain Fe/C-56)</name>
    <name type="common">Chlamydophila felis</name>
    <dbReference type="NCBI Taxonomy" id="264202"/>
    <lineage>
        <taxon>Bacteria</taxon>
        <taxon>Pseudomonadati</taxon>
        <taxon>Chlamydiota</taxon>
        <taxon>Chlamydiia</taxon>
        <taxon>Chlamydiales</taxon>
        <taxon>Chlamydiaceae</taxon>
        <taxon>Chlamydia/Chlamydophila group</taxon>
        <taxon>Chlamydia</taxon>
    </lineage>
</organism>
<dbReference type="EC" id="3.2.2.27" evidence="1"/>
<dbReference type="EMBL" id="AP006861">
    <property type="protein sequence ID" value="BAE80801.1"/>
    <property type="molecule type" value="Genomic_DNA"/>
</dbReference>
<dbReference type="RefSeq" id="WP_011457586.1">
    <property type="nucleotide sequence ID" value="NC_007899.1"/>
</dbReference>
<dbReference type="SMR" id="Q256I7"/>
<dbReference type="STRING" id="264202.CF0029"/>
<dbReference type="KEGG" id="cfe:CF0029"/>
<dbReference type="eggNOG" id="COG0692">
    <property type="taxonomic scope" value="Bacteria"/>
</dbReference>
<dbReference type="HOGENOM" id="CLU_032162_3_0_0"/>
<dbReference type="OrthoDB" id="9804372at2"/>
<dbReference type="Proteomes" id="UP000001260">
    <property type="component" value="Chromosome"/>
</dbReference>
<dbReference type="GO" id="GO:0005737">
    <property type="term" value="C:cytoplasm"/>
    <property type="evidence" value="ECO:0007669"/>
    <property type="project" value="UniProtKB-SubCell"/>
</dbReference>
<dbReference type="GO" id="GO:0004844">
    <property type="term" value="F:uracil DNA N-glycosylase activity"/>
    <property type="evidence" value="ECO:0007669"/>
    <property type="project" value="UniProtKB-UniRule"/>
</dbReference>
<dbReference type="GO" id="GO:0097510">
    <property type="term" value="P:base-excision repair, AP site formation via deaminated base removal"/>
    <property type="evidence" value="ECO:0007669"/>
    <property type="project" value="TreeGrafter"/>
</dbReference>
<dbReference type="CDD" id="cd10027">
    <property type="entry name" value="UDG-F1-like"/>
    <property type="match status" value="1"/>
</dbReference>
<dbReference type="FunFam" id="3.40.470.10:FF:000008">
    <property type="entry name" value="Uracil-DNA glycosylase"/>
    <property type="match status" value="1"/>
</dbReference>
<dbReference type="Gene3D" id="3.40.470.10">
    <property type="entry name" value="Uracil-DNA glycosylase-like domain"/>
    <property type="match status" value="1"/>
</dbReference>
<dbReference type="HAMAP" id="MF_00148">
    <property type="entry name" value="UDG"/>
    <property type="match status" value="1"/>
</dbReference>
<dbReference type="InterPro" id="IPR002043">
    <property type="entry name" value="UDG_fam1"/>
</dbReference>
<dbReference type="InterPro" id="IPR018085">
    <property type="entry name" value="Ura-DNA_Glyclase_AS"/>
</dbReference>
<dbReference type="InterPro" id="IPR005122">
    <property type="entry name" value="Uracil-DNA_glycosylase-like"/>
</dbReference>
<dbReference type="InterPro" id="IPR036895">
    <property type="entry name" value="Uracil-DNA_glycosylase-like_sf"/>
</dbReference>
<dbReference type="NCBIfam" id="NF003588">
    <property type="entry name" value="PRK05254.1-1"/>
    <property type="match status" value="1"/>
</dbReference>
<dbReference type="NCBIfam" id="NF003589">
    <property type="entry name" value="PRK05254.1-2"/>
    <property type="match status" value="1"/>
</dbReference>
<dbReference type="NCBIfam" id="NF003591">
    <property type="entry name" value="PRK05254.1-4"/>
    <property type="match status" value="1"/>
</dbReference>
<dbReference type="NCBIfam" id="NF003592">
    <property type="entry name" value="PRK05254.1-5"/>
    <property type="match status" value="1"/>
</dbReference>
<dbReference type="NCBIfam" id="TIGR00628">
    <property type="entry name" value="ung"/>
    <property type="match status" value="1"/>
</dbReference>
<dbReference type="PANTHER" id="PTHR11264">
    <property type="entry name" value="URACIL-DNA GLYCOSYLASE"/>
    <property type="match status" value="1"/>
</dbReference>
<dbReference type="PANTHER" id="PTHR11264:SF0">
    <property type="entry name" value="URACIL-DNA GLYCOSYLASE"/>
    <property type="match status" value="1"/>
</dbReference>
<dbReference type="Pfam" id="PF03167">
    <property type="entry name" value="UDG"/>
    <property type="match status" value="1"/>
</dbReference>
<dbReference type="SMART" id="SM00986">
    <property type="entry name" value="UDG"/>
    <property type="match status" value="1"/>
</dbReference>
<dbReference type="SMART" id="SM00987">
    <property type="entry name" value="UreE_C"/>
    <property type="match status" value="1"/>
</dbReference>
<dbReference type="SUPFAM" id="SSF52141">
    <property type="entry name" value="Uracil-DNA glycosylase-like"/>
    <property type="match status" value="1"/>
</dbReference>
<dbReference type="PROSITE" id="PS00130">
    <property type="entry name" value="U_DNA_GLYCOSYLASE"/>
    <property type="match status" value="1"/>
</dbReference>
<accession>Q256I7</accession>
<gene>
    <name evidence="1" type="primary">ung</name>
    <name type="ordered locus">CF0029</name>
</gene>
<keyword id="KW-0963">Cytoplasm</keyword>
<keyword id="KW-0227">DNA damage</keyword>
<keyword id="KW-0234">DNA repair</keyword>
<keyword id="KW-0378">Hydrolase</keyword>